<accession>A2RLU5</accession>
<proteinExistence type="inferred from homology"/>
<dbReference type="EC" id="1.5.1.5" evidence="1"/>
<dbReference type="EC" id="3.5.4.9" evidence="1"/>
<dbReference type="EMBL" id="AM406671">
    <property type="protein sequence ID" value="CAL98267.1"/>
    <property type="molecule type" value="Genomic_DNA"/>
</dbReference>
<dbReference type="RefSeq" id="WP_011835499.1">
    <property type="nucleotide sequence ID" value="NC_009004.1"/>
</dbReference>
<dbReference type="SMR" id="A2RLU5"/>
<dbReference type="STRING" id="416870.llmg_1693"/>
<dbReference type="GeneID" id="61109135"/>
<dbReference type="KEGG" id="llm:llmg_1693"/>
<dbReference type="eggNOG" id="COG0190">
    <property type="taxonomic scope" value="Bacteria"/>
</dbReference>
<dbReference type="HOGENOM" id="CLU_034045_2_1_9"/>
<dbReference type="PhylomeDB" id="A2RLU5"/>
<dbReference type="UniPathway" id="UPA00193"/>
<dbReference type="Proteomes" id="UP000000364">
    <property type="component" value="Chromosome"/>
</dbReference>
<dbReference type="GO" id="GO:0005829">
    <property type="term" value="C:cytosol"/>
    <property type="evidence" value="ECO:0007669"/>
    <property type="project" value="TreeGrafter"/>
</dbReference>
<dbReference type="GO" id="GO:0004477">
    <property type="term" value="F:methenyltetrahydrofolate cyclohydrolase activity"/>
    <property type="evidence" value="ECO:0007669"/>
    <property type="project" value="UniProtKB-UniRule"/>
</dbReference>
<dbReference type="GO" id="GO:0004488">
    <property type="term" value="F:methylenetetrahydrofolate dehydrogenase (NADP+) activity"/>
    <property type="evidence" value="ECO:0007669"/>
    <property type="project" value="UniProtKB-UniRule"/>
</dbReference>
<dbReference type="GO" id="GO:0000105">
    <property type="term" value="P:L-histidine biosynthetic process"/>
    <property type="evidence" value="ECO:0007669"/>
    <property type="project" value="UniProtKB-KW"/>
</dbReference>
<dbReference type="GO" id="GO:0009086">
    <property type="term" value="P:methionine biosynthetic process"/>
    <property type="evidence" value="ECO:0007669"/>
    <property type="project" value="UniProtKB-KW"/>
</dbReference>
<dbReference type="GO" id="GO:0006164">
    <property type="term" value="P:purine nucleotide biosynthetic process"/>
    <property type="evidence" value="ECO:0007669"/>
    <property type="project" value="UniProtKB-KW"/>
</dbReference>
<dbReference type="GO" id="GO:0035999">
    <property type="term" value="P:tetrahydrofolate interconversion"/>
    <property type="evidence" value="ECO:0007669"/>
    <property type="project" value="UniProtKB-UniRule"/>
</dbReference>
<dbReference type="CDD" id="cd01080">
    <property type="entry name" value="NAD_bind_m-THF_DH_Cyclohyd"/>
    <property type="match status" value="1"/>
</dbReference>
<dbReference type="FunFam" id="3.40.50.10860:FF:000001">
    <property type="entry name" value="Bifunctional protein FolD"/>
    <property type="match status" value="1"/>
</dbReference>
<dbReference type="FunFam" id="3.40.50.720:FF:000094">
    <property type="entry name" value="Bifunctional protein FolD"/>
    <property type="match status" value="1"/>
</dbReference>
<dbReference type="Gene3D" id="3.40.50.10860">
    <property type="entry name" value="Leucine Dehydrogenase, chain A, domain 1"/>
    <property type="match status" value="1"/>
</dbReference>
<dbReference type="Gene3D" id="3.40.50.720">
    <property type="entry name" value="NAD(P)-binding Rossmann-like Domain"/>
    <property type="match status" value="1"/>
</dbReference>
<dbReference type="HAMAP" id="MF_01576">
    <property type="entry name" value="THF_DHG_CYH"/>
    <property type="match status" value="1"/>
</dbReference>
<dbReference type="InterPro" id="IPR046346">
    <property type="entry name" value="Aminoacid_DH-like_N_sf"/>
</dbReference>
<dbReference type="InterPro" id="IPR036291">
    <property type="entry name" value="NAD(P)-bd_dom_sf"/>
</dbReference>
<dbReference type="InterPro" id="IPR000672">
    <property type="entry name" value="THF_DH/CycHdrlase"/>
</dbReference>
<dbReference type="InterPro" id="IPR020630">
    <property type="entry name" value="THF_DH/CycHdrlase_cat_dom"/>
</dbReference>
<dbReference type="InterPro" id="IPR020867">
    <property type="entry name" value="THF_DH/CycHdrlase_CS"/>
</dbReference>
<dbReference type="InterPro" id="IPR020631">
    <property type="entry name" value="THF_DH/CycHdrlase_NAD-bd_dom"/>
</dbReference>
<dbReference type="NCBIfam" id="NF008058">
    <property type="entry name" value="PRK10792.1"/>
    <property type="match status" value="1"/>
</dbReference>
<dbReference type="NCBIfam" id="NF010776">
    <property type="entry name" value="PRK14179.1"/>
    <property type="match status" value="1"/>
</dbReference>
<dbReference type="NCBIfam" id="NF010783">
    <property type="entry name" value="PRK14186.1"/>
    <property type="match status" value="1"/>
</dbReference>
<dbReference type="PANTHER" id="PTHR48099:SF5">
    <property type="entry name" value="C-1-TETRAHYDROFOLATE SYNTHASE, CYTOPLASMIC"/>
    <property type="match status" value="1"/>
</dbReference>
<dbReference type="PANTHER" id="PTHR48099">
    <property type="entry name" value="C-1-TETRAHYDROFOLATE SYNTHASE, CYTOPLASMIC-RELATED"/>
    <property type="match status" value="1"/>
</dbReference>
<dbReference type="Pfam" id="PF00763">
    <property type="entry name" value="THF_DHG_CYH"/>
    <property type="match status" value="1"/>
</dbReference>
<dbReference type="Pfam" id="PF02882">
    <property type="entry name" value="THF_DHG_CYH_C"/>
    <property type="match status" value="1"/>
</dbReference>
<dbReference type="PRINTS" id="PR00085">
    <property type="entry name" value="THFDHDRGNASE"/>
</dbReference>
<dbReference type="SUPFAM" id="SSF53223">
    <property type="entry name" value="Aminoacid dehydrogenase-like, N-terminal domain"/>
    <property type="match status" value="1"/>
</dbReference>
<dbReference type="SUPFAM" id="SSF51735">
    <property type="entry name" value="NAD(P)-binding Rossmann-fold domains"/>
    <property type="match status" value="1"/>
</dbReference>
<dbReference type="PROSITE" id="PS00766">
    <property type="entry name" value="THF_DHG_CYH_1"/>
    <property type="match status" value="1"/>
</dbReference>
<dbReference type="PROSITE" id="PS00767">
    <property type="entry name" value="THF_DHG_CYH_2"/>
    <property type="match status" value="1"/>
</dbReference>
<keyword id="KW-0028">Amino-acid biosynthesis</keyword>
<keyword id="KW-0368">Histidine biosynthesis</keyword>
<keyword id="KW-0378">Hydrolase</keyword>
<keyword id="KW-0486">Methionine biosynthesis</keyword>
<keyword id="KW-0511">Multifunctional enzyme</keyword>
<keyword id="KW-0521">NADP</keyword>
<keyword id="KW-0554">One-carbon metabolism</keyword>
<keyword id="KW-0560">Oxidoreductase</keyword>
<keyword id="KW-0658">Purine biosynthesis</keyword>
<name>FOLD_LACLM</name>
<sequence length="285" mass="31165">MNLIDGKALAAKMQAELKVKVDKLKEAGSVPGLAVILVGEDPASQIYVRNKARQATAIGLNSSVVRLPETVSEKELLELIEQYNQSEQWHGILVQLPLPKHISEEKVLLAIDPEKDVDGFHPMNMGRLWAGNPLMIPSTPAGIMEMFREYNVELSGKRAVVIGRSNIVGKPMAQLLMMADATVTIAHSRTKNLRELTKEADILVVAIGRDRMIKADDVKDGAVVIDVGMNRDEDGKLHGDVDFDEVKEVASLITPVPGGVGPMTITMLMEQTVRAATRKMNENSN</sequence>
<organism>
    <name type="scientific">Lactococcus lactis subsp. cremoris (strain MG1363)</name>
    <dbReference type="NCBI Taxonomy" id="416870"/>
    <lineage>
        <taxon>Bacteria</taxon>
        <taxon>Bacillati</taxon>
        <taxon>Bacillota</taxon>
        <taxon>Bacilli</taxon>
        <taxon>Lactobacillales</taxon>
        <taxon>Streptococcaceae</taxon>
        <taxon>Lactococcus</taxon>
        <taxon>Lactococcus cremoris subsp. cremoris</taxon>
    </lineage>
</organism>
<gene>
    <name evidence="1" type="primary">folD</name>
    <name type="ordered locus">llmg_1693</name>
</gene>
<comment type="function">
    <text evidence="1">Catalyzes the oxidation of 5,10-methylenetetrahydrofolate to 5,10-methenyltetrahydrofolate and then the hydrolysis of 5,10-methenyltetrahydrofolate to 10-formyltetrahydrofolate.</text>
</comment>
<comment type="catalytic activity">
    <reaction evidence="1">
        <text>(6R)-5,10-methylene-5,6,7,8-tetrahydrofolate + NADP(+) = (6R)-5,10-methenyltetrahydrofolate + NADPH</text>
        <dbReference type="Rhea" id="RHEA:22812"/>
        <dbReference type="ChEBI" id="CHEBI:15636"/>
        <dbReference type="ChEBI" id="CHEBI:57455"/>
        <dbReference type="ChEBI" id="CHEBI:57783"/>
        <dbReference type="ChEBI" id="CHEBI:58349"/>
        <dbReference type="EC" id="1.5.1.5"/>
    </reaction>
</comment>
<comment type="catalytic activity">
    <reaction evidence="1">
        <text>(6R)-5,10-methenyltetrahydrofolate + H2O = (6R)-10-formyltetrahydrofolate + H(+)</text>
        <dbReference type="Rhea" id="RHEA:23700"/>
        <dbReference type="ChEBI" id="CHEBI:15377"/>
        <dbReference type="ChEBI" id="CHEBI:15378"/>
        <dbReference type="ChEBI" id="CHEBI:57455"/>
        <dbReference type="ChEBI" id="CHEBI:195366"/>
        <dbReference type="EC" id="3.5.4.9"/>
    </reaction>
</comment>
<comment type="pathway">
    <text evidence="1">One-carbon metabolism; tetrahydrofolate interconversion.</text>
</comment>
<comment type="subunit">
    <text evidence="1">Homodimer.</text>
</comment>
<comment type="similarity">
    <text evidence="1">Belongs to the tetrahydrofolate dehydrogenase/cyclohydrolase family.</text>
</comment>
<evidence type="ECO:0000255" key="1">
    <source>
        <dbReference type="HAMAP-Rule" id="MF_01576"/>
    </source>
</evidence>
<reference key="1">
    <citation type="journal article" date="2007" name="J. Bacteriol.">
        <title>The complete genome sequence of the lactic acid bacterial paradigm Lactococcus lactis subsp. cremoris MG1363.</title>
        <authorList>
            <person name="Wegmann U."/>
            <person name="O'Connell-Motherway M."/>
            <person name="Zomer A."/>
            <person name="Buist G."/>
            <person name="Shearman C."/>
            <person name="Canchaya C."/>
            <person name="Ventura M."/>
            <person name="Goesmann A."/>
            <person name="Gasson M.J."/>
            <person name="Kuipers O.P."/>
            <person name="van Sinderen D."/>
            <person name="Kok J."/>
        </authorList>
    </citation>
    <scope>NUCLEOTIDE SEQUENCE [LARGE SCALE GENOMIC DNA]</scope>
    <source>
        <strain>MG1363</strain>
    </source>
</reference>
<protein>
    <recommendedName>
        <fullName evidence="1">Bifunctional protein FolD</fullName>
    </recommendedName>
    <domain>
        <recommendedName>
            <fullName evidence="1">Methylenetetrahydrofolate dehydrogenase</fullName>
            <ecNumber evidence="1">1.5.1.5</ecNumber>
        </recommendedName>
    </domain>
    <domain>
        <recommendedName>
            <fullName evidence="1">Methenyltetrahydrofolate cyclohydrolase</fullName>
            <ecNumber evidence="1">3.5.4.9</ecNumber>
        </recommendedName>
    </domain>
</protein>
<feature type="chain" id="PRO_0000305832" description="Bifunctional protein FolD">
    <location>
        <begin position="1"/>
        <end position="285"/>
    </location>
</feature>
<feature type="binding site" evidence="1">
    <location>
        <begin position="163"/>
        <end position="165"/>
    </location>
    <ligand>
        <name>NADP(+)</name>
        <dbReference type="ChEBI" id="CHEBI:58349"/>
    </ligand>
</feature>
<feature type="binding site" evidence="1">
    <location>
        <position position="188"/>
    </location>
    <ligand>
        <name>NADP(+)</name>
        <dbReference type="ChEBI" id="CHEBI:58349"/>
    </ligand>
</feature>